<feature type="chain" id="PRO_1000139795" description="Glucosamine-6-phosphate deaminase">
    <location>
        <begin position="1"/>
        <end position="235"/>
    </location>
</feature>
<feature type="active site" description="Proton acceptor; for enolization step" evidence="1">
    <location>
        <position position="62"/>
    </location>
</feature>
<feature type="active site" description="For ring-opening step" evidence="1">
    <location>
        <position position="128"/>
    </location>
</feature>
<feature type="active site" description="Proton acceptor; for ring-opening step" evidence="1">
    <location>
        <position position="130"/>
    </location>
</feature>
<feature type="active site" description="For ring-opening step" evidence="1">
    <location>
        <position position="135"/>
    </location>
</feature>
<proteinExistence type="inferred from homology"/>
<organism>
    <name type="scientific">Streptococcus pneumoniae serotype 19F (strain G54)</name>
    <dbReference type="NCBI Taxonomy" id="512566"/>
    <lineage>
        <taxon>Bacteria</taxon>
        <taxon>Bacillati</taxon>
        <taxon>Bacillota</taxon>
        <taxon>Bacilli</taxon>
        <taxon>Lactobacillales</taxon>
        <taxon>Streptococcaceae</taxon>
        <taxon>Streptococcus</taxon>
    </lineage>
</organism>
<protein>
    <recommendedName>
        <fullName evidence="1">Glucosamine-6-phosphate deaminase</fullName>
        <ecNumber evidence="1">3.5.99.6</ecNumber>
    </recommendedName>
    <alternativeName>
        <fullName evidence="1">GlcN6P deaminase</fullName>
        <shortName evidence="1">GNPDA</shortName>
    </alternativeName>
    <alternativeName>
        <fullName evidence="1">Glucosamine-6-phosphate isomerase</fullName>
    </alternativeName>
</protein>
<reference key="1">
    <citation type="journal article" date="2001" name="Microb. Drug Resist.">
        <title>Annotated draft genomic sequence from a Streptococcus pneumoniae type 19F clinical isolate.</title>
        <authorList>
            <person name="Dopazo J."/>
            <person name="Mendoza A."/>
            <person name="Herrero J."/>
            <person name="Caldara F."/>
            <person name="Humbert Y."/>
            <person name="Friedli L."/>
            <person name="Guerrier M."/>
            <person name="Grand-Schenk E."/>
            <person name="Gandin C."/>
            <person name="de Francesco M."/>
            <person name="Polissi A."/>
            <person name="Buell G."/>
            <person name="Feger G."/>
            <person name="Garcia E."/>
            <person name="Peitsch M."/>
            <person name="Garcia-Bustos J.F."/>
        </authorList>
    </citation>
    <scope>NUCLEOTIDE SEQUENCE [LARGE SCALE GENOMIC DNA]</scope>
    <source>
        <strain>G54</strain>
    </source>
</reference>
<reference key="2">
    <citation type="submission" date="2008-03" db="EMBL/GenBank/DDBJ databases">
        <title>Pneumococcal beta glucoside metabolism investigated by whole genome comparison.</title>
        <authorList>
            <person name="Mulas L."/>
            <person name="Trappetti C."/>
            <person name="Hakenbeck R."/>
            <person name="Iannelli F."/>
            <person name="Pozzi G."/>
            <person name="Davidsen T.M."/>
            <person name="Tettelin H."/>
            <person name="Oggioni M."/>
        </authorList>
    </citation>
    <scope>NUCLEOTIDE SEQUENCE [LARGE SCALE GENOMIC DNA]</scope>
    <source>
        <strain>G54</strain>
    </source>
</reference>
<dbReference type="EC" id="3.5.99.6" evidence="1"/>
<dbReference type="EMBL" id="CP001015">
    <property type="protein sequence ID" value="ACF56188.1"/>
    <property type="molecule type" value="Genomic_DNA"/>
</dbReference>
<dbReference type="SMR" id="B5E5S3"/>
<dbReference type="KEGG" id="spx:SPG_1356"/>
<dbReference type="HOGENOM" id="CLU_049611_1_0_9"/>
<dbReference type="UniPathway" id="UPA00629">
    <property type="reaction ID" value="UER00684"/>
</dbReference>
<dbReference type="GO" id="GO:0005737">
    <property type="term" value="C:cytoplasm"/>
    <property type="evidence" value="ECO:0007669"/>
    <property type="project" value="TreeGrafter"/>
</dbReference>
<dbReference type="GO" id="GO:0004342">
    <property type="term" value="F:glucosamine-6-phosphate deaminase activity"/>
    <property type="evidence" value="ECO:0007669"/>
    <property type="project" value="UniProtKB-UniRule"/>
</dbReference>
<dbReference type="GO" id="GO:0042802">
    <property type="term" value="F:identical protein binding"/>
    <property type="evidence" value="ECO:0007669"/>
    <property type="project" value="TreeGrafter"/>
</dbReference>
<dbReference type="GO" id="GO:0005975">
    <property type="term" value="P:carbohydrate metabolic process"/>
    <property type="evidence" value="ECO:0007669"/>
    <property type="project" value="InterPro"/>
</dbReference>
<dbReference type="GO" id="GO:0006043">
    <property type="term" value="P:glucosamine catabolic process"/>
    <property type="evidence" value="ECO:0007669"/>
    <property type="project" value="TreeGrafter"/>
</dbReference>
<dbReference type="GO" id="GO:0006046">
    <property type="term" value="P:N-acetylglucosamine catabolic process"/>
    <property type="evidence" value="ECO:0007669"/>
    <property type="project" value="TreeGrafter"/>
</dbReference>
<dbReference type="GO" id="GO:0019262">
    <property type="term" value="P:N-acetylneuraminate catabolic process"/>
    <property type="evidence" value="ECO:0007669"/>
    <property type="project" value="UniProtKB-UniRule"/>
</dbReference>
<dbReference type="CDD" id="cd01399">
    <property type="entry name" value="GlcN6P_deaminase"/>
    <property type="match status" value="1"/>
</dbReference>
<dbReference type="FunFam" id="3.40.50.1360:FF:000003">
    <property type="entry name" value="Glucosamine-6-phosphate deaminase"/>
    <property type="match status" value="1"/>
</dbReference>
<dbReference type="Gene3D" id="3.40.50.1360">
    <property type="match status" value="1"/>
</dbReference>
<dbReference type="HAMAP" id="MF_01241">
    <property type="entry name" value="GlcN6P_deamin"/>
    <property type="match status" value="1"/>
</dbReference>
<dbReference type="InterPro" id="IPR006148">
    <property type="entry name" value="Glc/Gal-6P_isomerase"/>
</dbReference>
<dbReference type="InterPro" id="IPR004547">
    <property type="entry name" value="Glucosamine6P_isomerase"/>
</dbReference>
<dbReference type="InterPro" id="IPR018321">
    <property type="entry name" value="Glucosamine6P_isomerase_CS"/>
</dbReference>
<dbReference type="InterPro" id="IPR037171">
    <property type="entry name" value="NagB/RpiA_transferase-like"/>
</dbReference>
<dbReference type="PANTHER" id="PTHR11280">
    <property type="entry name" value="GLUCOSAMINE-6-PHOSPHATE ISOMERASE"/>
    <property type="match status" value="1"/>
</dbReference>
<dbReference type="PANTHER" id="PTHR11280:SF5">
    <property type="entry name" value="GLUCOSAMINE-6-PHOSPHATE ISOMERASE"/>
    <property type="match status" value="1"/>
</dbReference>
<dbReference type="Pfam" id="PF01182">
    <property type="entry name" value="Glucosamine_iso"/>
    <property type="match status" value="1"/>
</dbReference>
<dbReference type="SUPFAM" id="SSF100950">
    <property type="entry name" value="NagB/RpiA/CoA transferase-like"/>
    <property type="match status" value="1"/>
</dbReference>
<dbReference type="PROSITE" id="PS01161">
    <property type="entry name" value="GLC_GALNAC_ISOMERASE"/>
    <property type="match status" value="1"/>
</dbReference>
<name>NAGB_STRP4</name>
<evidence type="ECO:0000255" key="1">
    <source>
        <dbReference type="HAMAP-Rule" id="MF_01241"/>
    </source>
</evidence>
<gene>
    <name evidence="1" type="primary">nagB</name>
    <name type="ordered locus">SPG_1356</name>
</gene>
<keyword id="KW-0119">Carbohydrate metabolism</keyword>
<keyword id="KW-0378">Hydrolase</keyword>
<sequence>MKVIKVENQVQGGKVAFEILKEKLANGAQTLGLATGSSPLEFYKEIVESDLDFSNLTSVNLDEYVGLDGDNPQSYRYFMQENLFNQKPFKESFLPRGVKDNAEAEVERYNQILADHPVDLQILGIGRNGHIGFNEPGTPFDSQTHLVELDQSTIEANARFFAKIEDVPTQAISMGIKNILDAKSIILFAYGESKAEAIAGTVSGPVTENLPASSLQNHPDVTIIADAEALSLLEK</sequence>
<accession>B5E5S3</accession>
<comment type="function">
    <text evidence="1">Catalyzes the reversible isomerization-deamination of glucosamine 6-phosphate (GlcN6P) to form fructose 6-phosphate (Fru6P) and ammonium ion.</text>
</comment>
<comment type="catalytic activity">
    <reaction evidence="1">
        <text>alpha-D-glucosamine 6-phosphate + H2O = beta-D-fructose 6-phosphate + NH4(+)</text>
        <dbReference type="Rhea" id="RHEA:12172"/>
        <dbReference type="ChEBI" id="CHEBI:15377"/>
        <dbReference type="ChEBI" id="CHEBI:28938"/>
        <dbReference type="ChEBI" id="CHEBI:57634"/>
        <dbReference type="ChEBI" id="CHEBI:75989"/>
        <dbReference type="EC" id="3.5.99.6"/>
    </reaction>
</comment>
<comment type="pathway">
    <text evidence="1">Amino-sugar metabolism; N-acetylneuraminate degradation; D-fructose 6-phosphate from N-acetylneuraminate: step 5/5.</text>
</comment>
<comment type="similarity">
    <text evidence="1">Belongs to the glucosamine/galactosamine-6-phosphate isomerase family. NagB subfamily.</text>
</comment>